<organism>
    <name type="scientific">Paraburkholderia phytofirmans (strain DSM 17436 / LMG 22146 / PsJN)</name>
    <name type="common">Burkholderia phytofirmans</name>
    <dbReference type="NCBI Taxonomy" id="398527"/>
    <lineage>
        <taxon>Bacteria</taxon>
        <taxon>Pseudomonadati</taxon>
        <taxon>Pseudomonadota</taxon>
        <taxon>Betaproteobacteria</taxon>
        <taxon>Burkholderiales</taxon>
        <taxon>Burkholderiaceae</taxon>
        <taxon>Paraburkholderia</taxon>
    </lineage>
</organism>
<dbReference type="EC" id="3.5.2.9" evidence="1"/>
<dbReference type="EMBL" id="CP001052">
    <property type="protein sequence ID" value="ACD18131.1"/>
    <property type="molecule type" value="Genomic_DNA"/>
</dbReference>
<dbReference type="RefSeq" id="WP_012434659.1">
    <property type="nucleotide sequence ID" value="NC_010681.1"/>
</dbReference>
<dbReference type="SMR" id="B2T6V9"/>
<dbReference type="STRING" id="398527.Bphyt_3743"/>
<dbReference type="KEGG" id="bpy:Bphyt_3743"/>
<dbReference type="eggNOG" id="COG1540">
    <property type="taxonomic scope" value="Bacteria"/>
</dbReference>
<dbReference type="HOGENOM" id="CLU_069535_0_0_4"/>
<dbReference type="OrthoDB" id="9773478at2"/>
<dbReference type="Proteomes" id="UP000001739">
    <property type="component" value="Chromosome 1"/>
</dbReference>
<dbReference type="GO" id="GO:0017168">
    <property type="term" value="F:5-oxoprolinase (ATP-hydrolyzing) activity"/>
    <property type="evidence" value="ECO:0007669"/>
    <property type="project" value="UniProtKB-UniRule"/>
</dbReference>
<dbReference type="GO" id="GO:0005524">
    <property type="term" value="F:ATP binding"/>
    <property type="evidence" value="ECO:0007669"/>
    <property type="project" value="UniProtKB-UniRule"/>
</dbReference>
<dbReference type="GO" id="GO:0005975">
    <property type="term" value="P:carbohydrate metabolic process"/>
    <property type="evidence" value="ECO:0007669"/>
    <property type="project" value="InterPro"/>
</dbReference>
<dbReference type="CDD" id="cd10800">
    <property type="entry name" value="LamB_YcsF_YbgL_like"/>
    <property type="match status" value="1"/>
</dbReference>
<dbReference type="Gene3D" id="3.20.20.370">
    <property type="entry name" value="Glycoside hydrolase/deacetylase"/>
    <property type="match status" value="1"/>
</dbReference>
<dbReference type="HAMAP" id="MF_00691">
    <property type="entry name" value="PxpA"/>
    <property type="match status" value="1"/>
</dbReference>
<dbReference type="InterPro" id="IPR011330">
    <property type="entry name" value="Glyco_hydro/deAcase_b/a-brl"/>
</dbReference>
<dbReference type="InterPro" id="IPR005501">
    <property type="entry name" value="LamB/YcsF/PxpA-like"/>
</dbReference>
<dbReference type="NCBIfam" id="NF003814">
    <property type="entry name" value="PRK05406.1-3"/>
    <property type="match status" value="1"/>
</dbReference>
<dbReference type="NCBIfam" id="NF003815">
    <property type="entry name" value="PRK05406.1-4"/>
    <property type="match status" value="1"/>
</dbReference>
<dbReference type="NCBIfam" id="NF003816">
    <property type="entry name" value="PRK05406.1-5"/>
    <property type="match status" value="1"/>
</dbReference>
<dbReference type="PANTHER" id="PTHR30292:SF0">
    <property type="entry name" value="5-OXOPROLINASE SUBUNIT A"/>
    <property type="match status" value="1"/>
</dbReference>
<dbReference type="PANTHER" id="PTHR30292">
    <property type="entry name" value="UNCHARACTERIZED PROTEIN YBGL-RELATED"/>
    <property type="match status" value="1"/>
</dbReference>
<dbReference type="Pfam" id="PF03746">
    <property type="entry name" value="LamB_YcsF"/>
    <property type="match status" value="1"/>
</dbReference>
<dbReference type="SUPFAM" id="SSF88713">
    <property type="entry name" value="Glycoside hydrolase/deacetylase"/>
    <property type="match status" value="1"/>
</dbReference>
<protein>
    <recommendedName>
        <fullName evidence="1">5-oxoprolinase subunit A</fullName>
        <shortName evidence="1">5-OPase subunit A</shortName>
        <ecNumber evidence="1">3.5.2.9</ecNumber>
    </recommendedName>
    <alternativeName>
        <fullName evidence="1">5-oxoprolinase (ATP-hydrolyzing) subunit A</fullName>
    </alternativeName>
</protein>
<gene>
    <name evidence="1" type="primary">pxpA</name>
    <name type="ordered locus">Bphyt_3743</name>
</gene>
<feature type="chain" id="PRO_1000132046" description="5-oxoprolinase subunit A">
    <location>
        <begin position="1"/>
        <end position="250"/>
    </location>
</feature>
<comment type="function">
    <text evidence="1">Catalyzes the cleavage of 5-oxoproline to form L-glutamate coupled to the hydrolysis of ATP to ADP and inorganic phosphate.</text>
</comment>
<comment type="catalytic activity">
    <reaction evidence="1">
        <text>5-oxo-L-proline + ATP + 2 H2O = L-glutamate + ADP + phosphate + H(+)</text>
        <dbReference type="Rhea" id="RHEA:10348"/>
        <dbReference type="ChEBI" id="CHEBI:15377"/>
        <dbReference type="ChEBI" id="CHEBI:15378"/>
        <dbReference type="ChEBI" id="CHEBI:29985"/>
        <dbReference type="ChEBI" id="CHEBI:30616"/>
        <dbReference type="ChEBI" id="CHEBI:43474"/>
        <dbReference type="ChEBI" id="CHEBI:58402"/>
        <dbReference type="ChEBI" id="CHEBI:456216"/>
        <dbReference type="EC" id="3.5.2.9"/>
    </reaction>
</comment>
<comment type="subunit">
    <text evidence="1">Forms a complex composed of PxpA, PxpB and PxpC.</text>
</comment>
<comment type="similarity">
    <text evidence="1">Belongs to the LamB/PxpA family.</text>
</comment>
<reference key="1">
    <citation type="journal article" date="2011" name="J. Bacteriol.">
        <title>Complete genome sequence of the plant growth-promoting endophyte Burkholderia phytofirmans strain PsJN.</title>
        <authorList>
            <person name="Weilharter A."/>
            <person name="Mitter B."/>
            <person name="Shin M.V."/>
            <person name="Chain P.S."/>
            <person name="Nowak J."/>
            <person name="Sessitsch A."/>
        </authorList>
    </citation>
    <scope>NUCLEOTIDE SEQUENCE [LARGE SCALE GENOMIC DNA]</scope>
    <source>
        <strain>DSM 17436 / LMG 22146 / PsJN</strain>
    </source>
</reference>
<keyword id="KW-0067">ATP-binding</keyword>
<keyword id="KW-0378">Hydrolase</keyword>
<keyword id="KW-0547">Nucleotide-binding</keyword>
<name>PXPA_PARPJ</name>
<sequence>MEIDLNADLGEGCGSDEALLDLVSSANIACGWHAGGANAMRDCVRWAVQKGVSIGAHPSFNDPENFGRKEMDLPASDIYAGVLYQLGALSAIAQAEGGRIAHVKPHGALYNQAARDSKIADAIVSAVHDFDPSVAVFALANSGLVTAARNAGLVAVEEVFADRGYRADGSLVPRKEPGALLDDEDEVLTRTLAMIREQRVQAVDGQWVSLNAQTICLHGDGPHALAFARRIRGALQDAGIEVHAAGAARA</sequence>
<accession>B2T6V9</accession>
<evidence type="ECO:0000255" key="1">
    <source>
        <dbReference type="HAMAP-Rule" id="MF_00691"/>
    </source>
</evidence>
<proteinExistence type="inferred from homology"/>